<proteinExistence type="inferred from homology"/>
<gene>
    <name evidence="1" type="primary">rpsO</name>
    <name type="synonym">rs15</name>
    <name type="ordered locus">CPn_1000</name>
    <name type="ordered locus">CP_0854</name>
    <name type="ordered locus">CpB1038</name>
</gene>
<keyword id="KW-0687">Ribonucleoprotein</keyword>
<keyword id="KW-0689">Ribosomal protein</keyword>
<keyword id="KW-0694">RNA-binding</keyword>
<keyword id="KW-0699">rRNA-binding</keyword>
<comment type="function">
    <text evidence="1">One of the primary rRNA binding proteins, it binds directly to 16S rRNA where it helps nucleate assembly of the platform of the 30S subunit by binding and bridging several RNA helices of the 16S rRNA.</text>
</comment>
<comment type="function">
    <text evidence="1">Forms an intersubunit bridge (bridge B4) with the 23S rRNA of the 50S subunit in the ribosome.</text>
</comment>
<comment type="subunit">
    <text evidence="1">Part of the 30S ribosomal subunit. Forms a bridge to the 50S subunit in the 70S ribosome, contacting the 23S rRNA.</text>
</comment>
<comment type="similarity">
    <text evidence="1">Belongs to the universal ribosomal protein uS15 family.</text>
</comment>
<organism>
    <name type="scientific">Chlamydia pneumoniae</name>
    <name type="common">Chlamydophila pneumoniae</name>
    <dbReference type="NCBI Taxonomy" id="83558"/>
    <lineage>
        <taxon>Bacteria</taxon>
        <taxon>Pseudomonadati</taxon>
        <taxon>Chlamydiota</taxon>
        <taxon>Chlamydiia</taxon>
        <taxon>Chlamydiales</taxon>
        <taxon>Chlamydiaceae</taxon>
        <taxon>Chlamydia/Chlamydophila group</taxon>
        <taxon>Chlamydia</taxon>
    </lineage>
</organism>
<name>RS15_CHLPN</name>
<evidence type="ECO:0000255" key="1">
    <source>
        <dbReference type="HAMAP-Rule" id="MF_01343"/>
    </source>
</evidence>
<evidence type="ECO:0000305" key="2"/>
<feature type="chain" id="PRO_0000115412" description="Small ribosomal subunit protein uS15">
    <location>
        <begin position="1"/>
        <end position="89"/>
    </location>
</feature>
<sequence length="89" mass="10400">MSLDKGTKEEITKKFQLHEKDTGSADVQIAILTEHIAELKEHLKRSPKDQNSRLALLKLVGQRRKLLEYLNSTDTERYKNLITRLNLRK</sequence>
<dbReference type="EMBL" id="AE001363">
    <property type="protein sequence ID" value="AAD19137.1"/>
    <property type="molecule type" value="Genomic_DNA"/>
</dbReference>
<dbReference type="EMBL" id="AE002161">
    <property type="protein sequence ID" value="AAF38643.1"/>
    <property type="molecule type" value="Genomic_DNA"/>
</dbReference>
<dbReference type="EMBL" id="BA000008">
    <property type="protein sequence ID" value="BAA99207.1"/>
    <property type="molecule type" value="Genomic_DNA"/>
</dbReference>
<dbReference type="EMBL" id="AE009440">
    <property type="protein sequence ID" value="AAP98967.1"/>
    <property type="molecule type" value="Genomic_DNA"/>
</dbReference>
<dbReference type="PIR" id="E86615">
    <property type="entry name" value="E86615"/>
</dbReference>
<dbReference type="PIR" id="H72009">
    <property type="entry name" value="H72009"/>
</dbReference>
<dbReference type="RefSeq" id="NP_225194.1">
    <property type="nucleotide sequence ID" value="NC_000922.1"/>
</dbReference>
<dbReference type="RefSeq" id="WP_010883633.1">
    <property type="nucleotide sequence ID" value="NZ_LN847257.1"/>
</dbReference>
<dbReference type="SMR" id="Q9Z6Q9"/>
<dbReference type="STRING" id="406984.CPK_ORF00425"/>
<dbReference type="GeneID" id="45051057"/>
<dbReference type="KEGG" id="cpa:CP_0854"/>
<dbReference type="KEGG" id="cpj:rs15"/>
<dbReference type="KEGG" id="cpn:CPn_1000"/>
<dbReference type="KEGG" id="cpt:CpB1038"/>
<dbReference type="PATRIC" id="fig|115713.3.peg.1095"/>
<dbReference type="eggNOG" id="COG0184">
    <property type="taxonomic scope" value="Bacteria"/>
</dbReference>
<dbReference type="HOGENOM" id="CLU_148518_0_0_0"/>
<dbReference type="OMA" id="RINYLTE"/>
<dbReference type="OrthoDB" id="9799262at2"/>
<dbReference type="Proteomes" id="UP000000583">
    <property type="component" value="Chromosome"/>
</dbReference>
<dbReference type="Proteomes" id="UP000000801">
    <property type="component" value="Chromosome"/>
</dbReference>
<dbReference type="GO" id="GO:0022627">
    <property type="term" value="C:cytosolic small ribosomal subunit"/>
    <property type="evidence" value="ECO:0007669"/>
    <property type="project" value="TreeGrafter"/>
</dbReference>
<dbReference type="GO" id="GO:0019843">
    <property type="term" value="F:rRNA binding"/>
    <property type="evidence" value="ECO:0007669"/>
    <property type="project" value="UniProtKB-UniRule"/>
</dbReference>
<dbReference type="GO" id="GO:0003735">
    <property type="term" value="F:structural constituent of ribosome"/>
    <property type="evidence" value="ECO:0007669"/>
    <property type="project" value="InterPro"/>
</dbReference>
<dbReference type="GO" id="GO:0006412">
    <property type="term" value="P:translation"/>
    <property type="evidence" value="ECO:0007669"/>
    <property type="project" value="UniProtKB-UniRule"/>
</dbReference>
<dbReference type="CDD" id="cd00353">
    <property type="entry name" value="Ribosomal_S15p_S13e"/>
    <property type="match status" value="1"/>
</dbReference>
<dbReference type="FunFam" id="1.10.287.10:FF:000002">
    <property type="entry name" value="30S ribosomal protein S15"/>
    <property type="match status" value="1"/>
</dbReference>
<dbReference type="Gene3D" id="6.10.250.3130">
    <property type="match status" value="1"/>
</dbReference>
<dbReference type="Gene3D" id="1.10.287.10">
    <property type="entry name" value="S15/NS1, RNA-binding"/>
    <property type="match status" value="1"/>
</dbReference>
<dbReference type="HAMAP" id="MF_01343_B">
    <property type="entry name" value="Ribosomal_uS15_B"/>
    <property type="match status" value="1"/>
</dbReference>
<dbReference type="InterPro" id="IPR000589">
    <property type="entry name" value="Ribosomal_uS15"/>
</dbReference>
<dbReference type="InterPro" id="IPR005290">
    <property type="entry name" value="Ribosomal_uS15_bac-type"/>
</dbReference>
<dbReference type="InterPro" id="IPR009068">
    <property type="entry name" value="uS15_NS1_RNA-bd_sf"/>
</dbReference>
<dbReference type="NCBIfam" id="TIGR00952">
    <property type="entry name" value="S15_bact"/>
    <property type="match status" value="1"/>
</dbReference>
<dbReference type="PANTHER" id="PTHR23321">
    <property type="entry name" value="RIBOSOMAL PROTEIN S15, BACTERIAL AND ORGANELLAR"/>
    <property type="match status" value="1"/>
</dbReference>
<dbReference type="PANTHER" id="PTHR23321:SF26">
    <property type="entry name" value="SMALL RIBOSOMAL SUBUNIT PROTEIN US15M"/>
    <property type="match status" value="1"/>
</dbReference>
<dbReference type="Pfam" id="PF00312">
    <property type="entry name" value="Ribosomal_S15"/>
    <property type="match status" value="1"/>
</dbReference>
<dbReference type="SMART" id="SM01387">
    <property type="entry name" value="Ribosomal_S15"/>
    <property type="match status" value="1"/>
</dbReference>
<dbReference type="SUPFAM" id="SSF47060">
    <property type="entry name" value="S15/NS1 RNA-binding domain"/>
    <property type="match status" value="1"/>
</dbReference>
<dbReference type="PROSITE" id="PS00362">
    <property type="entry name" value="RIBOSOMAL_S15"/>
    <property type="match status" value="1"/>
</dbReference>
<accession>Q9Z6Q9</accession>
<accession>Q9JQD5</accession>
<protein>
    <recommendedName>
        <fullName evidence="1">Small ribosomal subunit protein uS15</fullName>
    </recommendedName>
    <alternativeName>
        <fullName evidence="2">30S ribosomal protein S15</fullName>
    </alternativeName>
</protein>
<reference key="1">
    <citation type="journal article" date="1999" name="Nat. Genet.">
        <title>Comparative genomes of Chlamydia pneumoniae and C. trachomatis.</title>
        <authorList>
            <person name="Kalman S."/>
            <person name="Mitchell W.P."/>
            <person name="Marathe R."/>
            <person name="Lammel C.J."/>
            <person name="Fan J."/>
            <person name="Hyman R.W."/>
            <person name="Olinger L."/>
            <person name="Grimwood J."/>
            <person name="Davis R.W."/>
            <person name="Stephens R.S."/>
        </authorList>
    </citation>
    <scope>NUCLEOTIDE SEQUENCE [LARGE SCALE GENOMIC DNA]</scope>
    <source>
        <strain>CWL029</strain>
    </source>
</reference>
<reference key="2">
    <citation type="journal article" date="2000" name="Nucleic Acids Res.">
        <title>Genome sequences of Chlamydia trachomatis MoPn and Chlamydia pneumoniae AR39.</title>
        <authorList>
            <person name="Read T.D."/>
            <person name="Brunham R.C."/>
            <person name="Shen C."/>
            <person name="Gill S.R."/>
            <person name="Heidelberg J.F."/>
            <person name="White O."/>
            <person name="Hickey E.K."/>
            <person name="Peterson J.D."/>
            <person name="Utterback T.R."/>
            <person name="Berry K.J."/>
            <person name="Bass S."/>
            <person name="Linher K.D."/>
            <person name="Weidman J.F."/>
            <person name="Khouri H.M."/>
            <person name="Craven B."/>
            <person name="Bowman C."/>
            <person name="Dodson R.J."/>
            <person name="Gwinn M.L."/>
            <person name="Nelson W.C."/>
            <person name="DeBoy R.T."/>
            <person name="Kolonay J.F."/>
            <person name="McClarty G."/>
            <person name="Salzberg S.L."/>
            <person name="Eisen J.A."/>
            <person name="Fraser C.M."/>
        </authorList>
    </citation>
    <scope>NUCLEOTIDE SEQUENCE [LARGE SCALE GENOMIC DNA]</scope>
    <source>
        <strain>AR39</strain>
    </source>
</reference>
<reference key="3">
    <citation type="journal article" date="2000" name="Nucleic Acids Res.">
        <title>Comparison of whole genome sequences of Chlamydia pneumoniae J138 from Japan and CWL029 from USA.</title>
        <authorList>
            <person name="Shirai M."/>
            <person name="Hirakawa H."/>
            <person name="Kimoto M."/>
            <person name="Tabuchi M."/>
            <person name="Kishi F."/>
            <person name="Ouchi K."/>
            <person name="Shiba T."/>
            <person name="Ishii K."/>
            <person name="Hattori M."/>
            <person name="Kuhara S."/>
            <person name="Nakazawa T."/>
        </authorList>
    </citation>
    <scope>NUCLEOTIDE SEQUENCE [LARGE SCALE GENOMIC DNA]</scope>
    <source>
        <strain>J138</strain>
    </source>
</reference>
<reference key="4">
    <citation type="submission" date="2002-05" db="EMBL/GenBank/DDBJ databases">
        <title>The genome sequence of Chlamydia pneumoniae TW183 and comparison with other Chlamydia strains based on whole genome sequence analysis.</title>
        <authorList>
            <person name="Geng M.M."/>
            <person name="Schuhmacher A."/>
            <person name="Muehldorfer I."/>
            <person name="Bensch K.W."/>
            <person name="Schaefer K.P."/>
            <person name="Schneider S."/>
            <person name="Pohl T."/>
            <person name="Essig A."/>
            <person name="Marre R."/>
            <person name="Melchers K."/>
        </authorList>
    </citation>
    <scope>NUCLEOTIDE SEQUENCE [LARGE SCALE GENOMIC DNA]</scope>
    <source>
        <strain>TW-183</strain>
    </source>
</reference>